<keyword id="KW-0285">Flavoprotein</keyword>
<keyword id="KW-0288">FMN</keyword>
<keyword id="KW-0560">Oxidoreductase</keyword>
<keyword id="KW-0664">Pyridoxine biosynthesis</keyword>
<keyword id="KW-1185">Reference proteome</keyword>
<sequence length="212" mass="24230">MTDLSDIRREYTKGGLRRSELPEDPMALFERWMEQAKAAELTDPTAMCVATVDELGQPYQRIVLLKRFDEQGFVFFTNLGSRKATQLKHNAHISLLFPWHPLERQVAVTGIAEPLSTAEVLKYFVTRPKDSQIAAWVSAQSSKLSARQVLEAKFMEMKQKFSAGEVPLPSFWGGYLVRPASIEFWQGGEHRLHDRFIYEKTAAGWDIERLAP</sequence>
<dbReference type="EC" id="1.4.3.5" evidence="1"/>
<dbReference type="EMBL" id="CP000507">
    <property type="protein sequence ID" value="ABM00167.1"/>
    <property type="molecule type" value="Genomic_DNA"/>
</dbReference>
<dbReference type="RefSeq" id="WP_011760074.1">
    <property type="nucleotide sequence ID" value="NC_008700.1"/>
</dbReference>
<dbReference type="SMR" id="A1S710"/>
<dbReference type="STRING" id="326297.Sama_1961"/>
<dbReference type="KEGG" id="saz:Sama_1961"/>
<dbReference type="eggNOG" id="COG0259">
    <property type="taxonomic scope" value="Bacteria"/>
</dbReference>
<dbReference type="HOGENOM" id="CLU_032263_2_2_6"/>
<dbReference type="OrthoDB" id="9780392at2"/>
<dbReference type="UniPathway" id="UPA01068">
    <property type="reaction ID" value="UER00304"/>
</dbReference>
<dbReference type="UniPathway" id="UPA01068">
    <property type="reaction ID" value="UER00305"/>
</dbReference>
<dbReference type="Proteomes" id="UP000009175">
    <property type="component" value="Chromosome"/>
</dbReference>
<dbReference type="GO" id="GO:0010181">
    <property type="term" value="F:FMN binding"/>
    <property type="evidence" value="ECO:0007669"/>
    <property type="project" value="UniProtKB-UniRule"/>
</dbReference>
<dbReference type="GO" id="GO:0004733">
    <property type="term" value="F:pyridoxamine phosphate oxidase activity"/>
    <property type="evidence" value="ECO:0007669"/>
    <property type="project" value="UniProtKB-UniRule"/>
</dbReference>
<dbReference type="GO" id="GO:0008615">
    <property type="term" value="P:pyridoxine biosynthetic process"/>
    <property type="evidence" value="ECO:0007669"/>
    <property type="project" value="UniProtKB-KW"/>
</dbReference>
<dbReference type="Gene3D" id="2.30.110.10">
    <property type="entry name" value="Electron Transport, Fmn-binding Protein, Chain A"/>
    <property type="match status" value="1"/>
</dbReference>
<dbReference type="HAMAP" id="MF_01629">
    <property type="entry name" value="PdxH"/>
    <property type="match status" value="1"/>
</dbReference>
<dbReference type="InterPro" id="IPR000659">
    <property type="entry name" value="Pyridox_Oxase"/>
</dbReference>
<dbReference type="InterPro" id="IPR019740">
    <property type="entry name" value="Pyridox_Oxase_CS"/>
</dbReference>
<dbReference type="InterPro" id="IPR011576">
    <property type="entry name" value="Pyridox_Oxase_N"/>
</dbReference>
<dbReference type="InterPro" id="IPR019576">
    <property type="entry name" value="Pyridoxamine_oxidase_dimer_C"/>
</dbReference>
<dbReference type="InterPro" id="IPR012349">
    <property type="entry name" value="Split_barrel_FMN-bd"/>
</dbReference>
<dbReference type="NCBIfam" id="TIGR00558">
    <property type="entry name" value="pdxH"/>
    <property type="match status" value="1"/>
</dbReference>
<dbReference type="NCBIfam" id="NF004231">
    <property type="entry name" value="PRK05679.1"/>
    <property type="match status" value="1"/>
</dbReference>
<dbReference type="PANTHER" id="PTHR10851:SF0">
    <property type="entry name" value="PYRIDOXINE-5'-PHOSPHATE OXIDASE"/>
    <property type="match status" value="1"/>
</dbReference>
<dbReference type="PANTHER" id="PTHR10851">
    <property type="entry name" value="PYRIDOXINE-5-PHOSPHATE OXIDASE"/>
    <property type="match status" value="1"/>
</dbReference>
<dbReference type="Pfam" id="PF10590">
    <property type="entry name" value="PNP_phzG_C"/>
    <property type="match status" value="1"/>
</dbReference>
<dbReference type="Pfam" id="PF01243">
    <property type="entry name" value="PNPOx_N"/>
    <property type="match status" value="1"/>
</dbReference>
<dbReference type="PIRSF" id="PIRSF000190">
    <property type="entry name" value="Pyd_amn-ph_oxd"/>
    <property type="match status" value="1"/>
</dbReference>
<dbReference type="SUPFAM" id="SSF50475">
    <property type="entry name" value="FMN-binding split barrel"/>
    <property type="match status" value="1"/>
</dbReference>
<dbReference type="PROSITE" id="PS01064">
    <property type="entry name" value="PYRIDOX_OXIDASE"/>
    <property type="match status" value="1"/>
</dbReference>
<gene>
    <name evidence="1" type="primary">pdxH</name>
    <name type="ordered locus">Sama_1961</name>
</gene>
<organism>
    <name type="scientific">Shewanella amazonensis (strain ATCC BAA-1098 / SB2B)</name>
    <dbReference type="NCBI Taxonomy" id="326297"/>
    <lineage>
        <taxon>Bacteria</taxon>
        <taxon>Pseudomonadati</taxon>
        <taxon>Pseudomonadota</taxon>
        <taxon>Gammaproteobacteria</taxon>
        <taxon>Alteromonadales</taxon>
        <taxon>Shewanellaceae</taxon>
        <taxon>Shewanella</taxon>
    </lineage>
</organism>
<name>PDXH_SHEAM</name>
<proteinExistence type="inferred from homology"/>
<comment type="function">
    <text evidence="1">Catalyzes the oxidation of either pyridoxine 5'-phosphate (PNP) or pyridoxamine 5'-phosphate (PMP) into pyridoxal 5'-phosphate (PLP).</text>
</comment>
<comment type="catalytic activity">
    <reaction evidence="1">
        <text>pyridoxamine 5'-phosphate + O2 + H2O = pyridoxal 5'-phosphate + H2O2 + NH4(+)</text>
        <dbReference type="Rhea" id="RHEA:15817"/>
        <dbReference type="ChEBI" id="CHEBI:15377"/>
        <dbReference type="ChEBI" id="CHEBI:15379"/>
        <dbReference type="ChEBI" id="CHEBI:16240"/>
        <dbReference type="ChEBI" id="CHEBI:28938"/>
        <dbReference type="ChEBI" id="CHEBI:58451"/>
        <dbReference type="ChEBI" id="CHEBI:597326"/>
        <dbReference type="EC" id="1.4.3.5"/>
    </reaction>
</comment>
<comment type="catalytic activity">
    <reaction evidence="1">
        <text>pyridoxine 5'-phosphate + O2 = pyridoxal 5'-phosphate + H2O2</text>
        <dbReference type="Rhea" id="RHEA:15149"/>
        <dbReference type="ChEBI" id="CHEBI:15379"/>
        <dbReference type="ChEBI" id="CHEBI:16240"/>
        <dbReference type="ChEBI" id="CHEBI:58589"/>
        <dbReference type="ChEBI" id="CHEBI:597326"/>
        <dbReference type="EC" id="1.4.3.5"/>
    </reaction>
</comment>
<comment type="cofactor">
    <cofactor evidence="1">
        <name>FMN</name>
        <dbReference type="ChEBI" id="CHEBI:58210"/>
    </cofactor>
    <text evidence="1">Binds 1 FMN per subunit.</text>
</comment>
<comment type="pathway">
    <text evidence="1">Cofactor metabolism; pyridoxal 5'-phosphate salvage; pyridoxal 5'-phosphate from pyridoxamine 5'-phosphate: step 1/1.</text>
</comment>
<comment type="pathway">
    <text evidence="1">Cofactor metabolism; pyridoxal 5'-phosphate salvage; pyridoxal 5'-phosphate from pyridoxine 5'-phosphate: step 1/1.</text>
</comment>
<comment type="subunit">
    <text evidence="1">Homodimer.</text>
</comment>
<comment type="similarity">
    <text evidence="1">Belongs to the pyridoxamine 5'-phosphate oxidase family.</text>
</comment>
<evidence type="ECO:0000255" key="1">
    <source>
        <dbReference type="HAMAP-Rule" id="MF_01629"/>
    </source>
</evidence>
<protein>
    <recommendedName>
        <fullName evidence="1">Pyridoxine/pyridoxamine 5'-phosphate oxidase</fullName>
        <ecNumber evidence="1">1.4.3.5</ecNumber>
    </recommendedName>
    <alternativeName>
        <fullName evidence="1">PNP/PMP oxidase</fullName>
        <shortName evidence="1">PNPOx</shortName>
    </alternativeName>
    <alternativeName>
        <fullName evidence="1">Pyridoxal 5'-phosphate synthase</fullName>
    </alternativeName>
</protein>
<feature type="chain" id="PRO_0000292325" description="Pyridoxine/pyridoxamine 5'-phosphate oxidase">
    <location>
        <begin position="1"/>
        <end position="212"/>
    </location>
</feature>
<feature type="binding site" evidence="1">
    <location>
        <begin position="8"/>
        <end position="11"/>
    </location>
    <ligand>
        <name>substrate</name>
    </ligand>
</feature>
<feature type="binding site" evidence="1">
    <location>
        <begin position="61"/>
        <end position="66"/>
    </location>
    <ligand>
        <name>FMN</name>
        <dbReference type="ChEBI" id="CHEBI:58210"/>
    </ligand>
</feature>
<feature type="binding site" evidence="1">
    <location>
        <position position="66"/>
    </location>
    <ligand>
        <name>substrate</name>
    </ligand>
</feature>
<feature type="binding site" evidence="1">
    <location>
        <begin position="76"/>
        <end position="77"/>
    </location>
    <ligand>
        <name>FMN</name>
        <dbReference type="ChEBI" id="CHEBI:58210"/>
    </ligand>
</feature>
<feature type="binding site" evidence="1">
    <location>
        <position position="82"/>
    </location>
    <ligand>
        <name>FMN</name>
        <dbReference type="ChEBI" id="CHEBI:58210"/>
    </ligand>
</feature>
<feature type="binding site" evidence="1">
    <location>
        <position position="83"/>
    </location>
    <ligand>
        <name>FMN</name>
        <dbReference type="ChEBI" id="CHEBI:58210"/>
    </ligand>
</feature>
<feature type="binding site" evidence="1">
    <location>
        <position position="105"/>
    </location>
    <ligand>
        <name>FMN</name>
        <dbReference type="ChEBI" id="CHEBI:58210"/>
    </ligand>
</feature>
<feature type="binding site" evidence="1">
    <location>
        <position position="123"/>
    </location>
    <ligand>
        <name>substrate</name>
    </ligand>
</feature>
<feature type="binding site" evidence="1">
    <location>
        <position position="127"/>
    </location>
    <ligand>
        <name>substrate</name>
    </ligand>
</feature>
<feature type="binding site" evidence="1">
    <location>
        <position position="131"/>
    </location>
    <ligand>
        <name>substrate</name>
    </ligand>
</feature>
<feature type="binding site" evidence="1">
    <location>
        <begin position="140"/>
        <end position="141"/>
    </location>
    <ligand>
        <name>FMN</name>
        <dbReference type="ChEBI" id="CHEBI:58210"/>
    </ligand>
</feature>
<feature type="binding site" evidence="1">
    <location>
        <position position="185"/>
    </location>
    <ligand>
        <name>FMN</name>
        <dbReference type="ChEBI" id="CHEBI:58210"/>
    </ligand>
</feature>
<feature type="binding site" evidence="1">
    <location>
        <begin position="191"/>
        <end position="193"/>
    </location>
    <ligand>
        <name>substrate</name>
    </ligand>
</feature>
<feature type="binding site" evidence="1">
    <location>
        <position position="195"/>
    </location>
    <ligand>
        <name>FMN</name>
        <dbReference type="ChEBI" id="CHEBI:58210"/>
    </ligand>
</feature>
<accession>A1S710</accession>
<reference key="1">
    <citation type="submission" date="2006-12" db="EMBL/GenBank/DDBJ databases">
        <title>Complete sequence of Shewanella amazonensis SB2B.</title>
        <authorList>
            <consortium name="US DOE Joint Genome Institute"/>
            <person name="Copeland A."/>
            <person name="Lucas S."/>
            <person name="Lapidus A."/>
            <person name="Barry K."/>
            <person name="Detter J.C."/>
            <person name="Glavina del Rio T."/>
            <person name="Hammon N."/>
            <person name="Israni S."/>
            <person name="Dalin E."/>
            <person name="Tice H."/>
            <person name="Pitluck S."/>
            <person name="Munk A.C."/>
            <person name="Brettin T."/>
            <person name="Bruce D."/>
            <person name="Han C."/>
            <person name="Tapia R."/>
            <person name="Gilna P."/>
            <person name="Schmutz J."/>
            <person name="Larimer F."/>
            <person name="Land M."/>
            <person name="Hauser L."/>
            <person name="Kyrpides N."/>
            <person name="Mikhailova N."/>
            <person name="Fredrickson J."/>
            <person name="Richardson P."/>
        </authorList>
    </citation>
    <scope>NUCLEOTIDE SEQUENCE [LARGE SCALE GENOMIC DNA]</scope>
    <source>
        <strain>ATCC BAA-1098 / SB2B</strain>
    </source>
</reference>